<protein>
    <recommendedName>
        <fullName>Porphobilinogen deaminase</fullName>
        <shortName>PBG</shortName>
        <ecNumber>2.5.1.61</ecNumber>
    </recommendedName>
    <alternativeName>
        <fullName>Hydroxymethylbilane synthase</fullName>
        <shortName>HMBS</shortName>
    </alternativeName>
    <alternativeName>
        <fullName>Pre-uroporphyrinogen synthase</fullName>
    </alternativeName>
</protein>
<proteinExistence type="inferred from homology"/>
<sequence>MLDNVLRIATRQSPLALWQAHYVKDALMATHPGLTVELVPMVTRGDVILDTPLAKVGGKGLFVKELEIALLEKRADIAVHSMKDVPVAFPDGLGLVTICEREDPRDAFVSNKYHSLDDLPAGSIVGTSSLRRQCQLAERRPDLIIRSLRGNVGTRLGKLDNGDYDAIILAVAGLKRLGLESRIRTALPPDVSLPAVGQGAVGIECRLDDARTQALLAPLNHSQTALRVTAERAMNTRLEGGCQVPIGSYAEIINGEIWLRALVGAPDGSVMVRGERRGSPEQAEQMGISLAEELLENGARAILTEVYNGETPA</sequence>
<gene>
    <name type="primary">hemC</name>
    <name type="ordered locus">STY3621</name>
    <name type="ordered locus">t3359</name>
</gene>
<evidence type="ECO:0000250" key="1"/>
<evidence type="ECO:0000305" key="2"/>
<reference key="1">
    <citation type="journal article" date="2001" name="Nature">
        <title>Complete genome sequence of a multiple drug resistant Salmonella enterica serovar Typhi CT18.</title>
        <authorList>
            <person name="Parkhill J."/>
            <person name="Dougan G."/>
            <person name="James K.D."/>
            <person name="Thomson N.R."/>
            <person name="Pickard D."/>
            <person name="Wain J."/>
            <person name="Churcher C.M."/>
            <person name="Mungall K.L."/>
            <person name="Bentley S.D."/>
            <person name="Holden M.T.G."/>
            <person name="Sebaihia M."/>
            <person name="Baker S."/>
            <person name="Basham D."/>
            <person name="Brooks K."/>
            <person name="Chillingworth T."/>
            <person name="Connerton P."/>
            <person name="Cronin A."/>
            <person name="Davis P."/>
            <person name="Davies R.M."/>
            <person name="Dowd L."/>
            <person name="White N."/>
            <person name="Farrar J."/>
            <person name="Feltwell T."/>
            <person name="Hamlin N."/>
            <person name="Haque A."/>
            <person name="Hien T.T."/>
            <person name="Holroyd S."/>
            <person name="Jagels K."/>
            <person name="Krogh A."/>
            <person name="Larsen T.S."/>
            <person name="Leather S."/>
            <person name="Moule S."/>
            <person name="O'Gaora P."/>
            <person name="Parry C."/>
            <person name="Quail M.A."/>
            <person name="Rutherford K.M."/>
            <person name="Simmonds M."/>
            <person name="Skelton J."/>
            <person name="Stevens K."/>
            <person name="Whitehead S."/>
            <person name="Barrell B.G."/>
        </authorList>
    </citation>
    <scope>NUCLEOTIDE SEQUENCE [LARGE SCALE GENOMIC DNA]</scope>
    <source>
        <strain>CT18</strain>
    </source>
</reference>
<reference key="2">
    <citation type="journal article" date="2003" name="J. Bacteriol.">
        <title>Comparative genomics of Salmonella enterica serovar Typhi strains Ty2 and CT18.</title>
        <authorList>
            <person name="Deng W."/>
            <person name="Liou S.-R."/>
            <person name="Plunkett G. III"/>
            <person name="Mayhew G.F."/>
            <person name="Rose D.J."/>
            <person name="Burland V."/>
            <person name="Kodoyianni V."/>
            <person name="Schwartz D.C."/>
            <person name="Blattner F.R."/>
        </authorList>
    </citation>
    <scope>NUCLEOTIDE SEQUENCE [LARGE SCALE GENOMIC DNA]</scope>
    <source>
        <strain>ATCC 700931 / Ty2</strain>
    </source>
</reference>
<keyword id="KW-0627">Porphyrin biosynthesis</keyword>
<keyword id="KW-0808">Transferase</keyword>
<accession>P0A1Q9</accession>
<accession>Q9L6Q2</accession>
<comment type="function">
    <text evidence="1">Tetrapolymerization of the monopyrrole PBG into the hydroxymethylbilane pre-uroporphyrinogen in several discrete steps.</text>
</comment>
<comment type="catalytic activity">
    <reaction>
        <text>4 porphobilinogen + H2O = hydroxymethylbilane + 4 NH4(+)</text>
        <dbReference type="Rhea" id="RHEA:13185"/>
        <dbReference type="ChEBI" id="CHEBI:15377"/>
        <dbReference type="ChEBI" id="CHEBI:28938"/>
        <dbReference type="ChEBI" id="CHEBI:57845"/>
        <dbReference type="ChEBI" id="CHEBI:58126"/>
        <dbReference type="EC" id="2.5.1.61"/>
    </reaction>
</comment>
<comment type="cofactor">
    <cofactor evidence="1">
        <name>dipyrromethane</name>
        <dbReference type="ChEBI" id="CHEBI:60342"/>
    </cofactor>
    <text evidence="1">Binds 1 dipyrromethane group covalently.</text>
</comment>
<comment type="pathway">
    <text>Porphyrin-containing compound metabolism; protoporphyrin-IX biosynthesis; coproporphyrinogen-III from 5-aminolevulinate: step 2/4.</text>
</comment>
<comment type="subunit">
    <text evidence="1">Monomer.</text>
</comment>
<comment type="miscellaneous">
    <text evidence="1">The porphobilinogen subunits are added to the dipyrromethane group.</text>
</comment>
<comment type="similarity">
    <text evidence="2">Belongs to the HMBS family.</text>
</comment>
<feature type="chain" id="PRO_0000142984" description="Porphobilinogen deaminase">
    <location>
        <begin position="1"/>
        <end position="313"/>
    </location>
</feature>
<feature type="modified residue" description="S-(dipyrrolylmethanemethyl)cysteine" evidence="1">
    <location>
        <position position="242"/>
    </location>
</feature>
<name>HEM3_SALTI</name>
<organism>
    <name type="scientific">Salmonella typhi</name>
    <dbReference type="NCBI Taxonomy" id="90370"/>
    <lineage>
        <taxon>Bacteria</taxon>
        <taxon>Pseudomonadati</taxon>
        <taxon>Pseudomonadota</taxon>
        <taxon>Gammaproteobacteria</taxon>
        <taxon>Enterobacterales</taxon>
        <taxon>Enterobacteriaceae</taxon>
        <taxon>Salmonella</taxon>
    </lineage>
</organism>
<dbReference type="EC" id="2.5.1.61"/>
<dbReference type="EMBL" id="AL513382">
    <property type="protein sequence ID" value="CAD09382.1"/>
    <property type="molecule type" value="Genomic_DNA"/>
</dbReference>
<dbReference type="EMBL" id="AE014613">
    <property type="protein sequence ID" value="AAO70887.1"/>
    <property type="molecule type" value="Genomic_DNA"/>
</dbReference>
<dbReference type="RefSeq" id="NP_457813.1">
    <property type="nucleotide sequence ID" value="NC_003198.1"/>
</dbReference>
<dbReference type="RefSeq" id="WP_001521319.1">
    <property type="nucleotide sequence ID" value="NZ_WSUR01000032.1"/>
</dbReference>
<dbReference type="SMR" id="P0A1Q9"/>
<dbReference type="STRING" id="220341.gene:17587473"/>
<dbReference type="KEGG" id="stt:t3359"/>
<dbReference type="KEGG" id="sty:STY3621"/>
<dbReference type="PATRIC" id="fig|220341.7.peg.3690"/>
<dbReference type="eggNOG" id="COG0181">
    <property type="taxonomic scope" value="Bacteria"/>
</dbReference>
<dbReference type="HOGENOM" id="CLU_019704_0_2_6"/>
<dbReference type="OMA" id="LWQANHI"/>
<dbReference type="OrthoDB" id="9810298at2"/>
<dbReference type="UniPathway" id="UPA00251">
    <property type="reaction ID" value="UER00319"/>
</dbReference>
<dbReference type="Proteomes" id="UP000000541">
    <property type="component" value="Chromosome"/>
</dbReference>
<dbReference type="Proteomes" id="UP000002670">
    <property type="component" value="Chromosome"/>
</dbReference>
<dbReference type="GO" id="GO:0005737">
    <property type="term" value="C:cytoplasm"/>
    <property type="evidence" value="ECO:0007669"/>
    <property type="project" value="TreeGrafter"/>
</dbReference>
<dbReference type="GO" id="GO:0004418">
    <property type="term" value="F:hydroxymethylbilane synthase activity"/>
    <property type="evidence" value="ECO:0007669"/>
    <property type="project" value="UniProtKB-UniRule"/>
</dbReference>
<dbReference type="GO" id="GO:0006782">
    <property type="term" value="P:protoporphyrinogen IX biosynthetic process"/>
    <property type="evidence" value="ECO:0007669"/>
    <property type="project" value="UniProtKB-UniRule"/>
</dbReference>
<dbReference type="CDD" id="cd13646">
    <property type="entry name" value="PBP2_EcHMBS_like"/>
    <property type="match status" value="1"/>
</dbReference>
<dbReference type="FunFam" id="3.30.160.40:FF:000002">
    <property type="entry name" value="Porphobilinogen deaminase"/>
    <property type="match status" value="1"/>
</dbReference>
<dbReference type="FunFam" id="3.40.190.10:FF:000004">
    <property type="entry name" value="Porphobilinogen deaminase"/>
    <property type="match status" value="1"/>
</dbReference>
<dbReference type="FunFam" id="3.40.190.10:FF:000005">
    <property type="entry name" value="Porphobilinogen deaminase"/>
    <property type="match status" value="1"/>
</dbReference>
<dbReference type="Gene3D" id="3.40.190.10">
    <property type="entry name" value="Periplasmic binding protein-like II"/>
    <property type="match status" value="2"/>
</dbReference>
<dbReference type="Gene3D" id="3.30.160.40">
    <property type="entry name" value="Porphobilinogen deaminase, C-terminal domain"/>
    <property type="match status" value="1"/>
</dbReference>
<dbReference type="HAMAP" id="MF_00260">
    <property type="entry name" value="Porphobil_deam"/>
    <property type="match status" value="1"/>
</dbReference>
<dbReference type="InterPro" id="IPR000860">
    <property type="entry name" value="HemC"/>
</dbReference>
<dbReference type="InterPro" id="IPR022419">
    <property type="entry name" value="Porphobilin_deaminase_cofac_BS"/>
</dbReference>
<dbReference type="InterPro" id="IPR022417">
    <property type="entry name" value="Porphobilin_deaminase_N"/>
</dbReference>
<dbReference type="InterPro" id="IPR022418">
    <property type="entry name" value="Porphobilinogen_deaminase_C"/>
</dbReference>
<dbReference type="InterPro" id="IPR036803">
    <property type="entry name" value="Porphobilinogen_deaminase_C_sf"/>
</dbReference>
<dbReference type="NCBIfam" id="TIGR00212">
    <property type="entry name" value="hemC"/>
    <property type="match status" value="1"/>
</dbReference>
<dbReference type="PANTHER" id="PTHR11557">
    <property type="entry name" value="PORPHOBILINOGEN DEAMINASE"/>
    <property type="match status" value="1"/>
</dbReference>
<dbReference type="PANTHER" id="PTHR11557:SF0">
    <property type="entry name" value="PORPHOBILINOGEN DEAMINASE"/>
    <property type="match status" value="1"/>
</dbReference>
<dbReference type="Pfam" id="PF01379">
    <property type="entry name" value="Porphobil_deam"/>
    <property type="match status" value="1"/>
</dbReference>
<dbReference type="Pfam" id="PF03900">
    <property type="entry name" value="Porphobil_deamC"/>
    <property type="match status" value="1"/>
</dbReference>
<dbReference type="PIRSF" id="PIRSF001438">
    <property type="entry name" value="4pyrrol_synth_OHMeBilane_synth"/>
    <property type="match status" value="1"/>
</dbReference>
<dbReference type="PRINTS" id="PR00151">
    <property type="entry name" value="PORPHBDMNASE"/>
</dbReference>
<dbReference type="SUPFAM" id="SSF53850">
    <property type="entry name" value="Periplasmic binding protein-like II"/>
    <property type="match status" value="1"/>
</dbReference>
<dbReference type="SUPFAM" id="SSF54782">
    <property type="entry name" value="Porphobilinogen deaminase (hydroxymethylbilane synthase), C-terminal domain"/>
    <property type="match status" value="1"/>
</dbReference>
<dbReference type="PROSITE" id="PS00533">
    <property type="entry name" value="PORPHOBILINOGEN_DEAM"/>
    <property type="match status" value="1"/>
</dbReference>